<accession>Q39EP0</accession>
<dbReference type="EC" id="4.3.1.3" evidence="1"/>
<dbReference type="EMBL" id="CP000151">
    <property type="protein sequence ID" value="ABB09076.1"/>
    <property type="molecule type" value="Genomic_DNA"/>
</dbReference>
<dbReference type="RefSeq" id="WP_011352610.1">
    <property type="nucleotide sequence ID" value="NC_007510.1"/>
</dbReference>
<dbReference type="SMR" id="Q39EP0"/>
<dbReference type="GeneID" id="45095363"/>
<dbReference type="KEGG" id="bur:Bcep18194_A5482"/>
<dbReference type="PATRIC" id="fig|482957.22.peg.2437"/>
<dbReference type="HOGENOM" id="CLU_014801_4_0_4"/>
<dbReference type="UniPathway" id="UPA00379">
    <property type="reaction ID" value="UER00549"/>
</dbReference>
<dbReference type="Proteomes" id="UP000002705">
    <property type="component" value="Chromosome 1"/>
</dbReference>
<dbReference type="GO" id="GO:0005737">
    <property type="term" value="C:cytoplasm"/>
    <property type="evidence" value="ECO:0007669"/>
    <property type="project" value="UniProtKB-SubCell"/>
</dbReference>
<dbReference type="GO" id="GO:0004397">
    <property type="term" value="F:histidine ammonia-lyase activity"/>
    <property type="evidence" value="ECO:0007669"/>
    <property type="project" value="UniProtKB-UniRule"/>
</dbReference>
<dbReference type="GO" id="GO:0019556">
    <property type="term" value="P:L-histidine catabolic process to glutamate and formamide"/>
    <property type="evidence" value="ECO:0007669"/>
    <property type="project" value="UniProtKB-UniPathway"/>
</dbReference>
<dbReference type="GO" id="GO:0019557">
    <property type="term" value="P:L-histidine catabolic process to glutamate and formate"/>
    <property type="evidence" value="ECO:0007669"/>
    <property type="project" value="UniProtKB-UniPathway"/>
</dbReference>
<dbReference type="CDD" id="cd00332">
    <property type="entry name" value="PAL-HAL"/>
    <property type="match status" value="1"/>
</dbReference>
<dbReference type="FunFam" id="1.10.275.10:FF:000005">
    <property type="entry name" value="Histidine ammonia-lyase"/>
    <property type="match status" value="1"/>
</dbReference>
<dbReference type="FunFam" id="1.20.200.10:FF:000003">
    <property type="entry name" value="Histidine ammonia-lyase"/>
    <property type="match status" value="1"/>
</dbReference>
<dbReference type="Gene3D" id="1.20.200.10">
    <property type="entry name" value="Fumarase/aspartase (Central domain)"/>
    <property type="match status" value="1"/>
</dbReference>
<dbReference type="Gene3D" id="1.10.275.10">
    <property type="entry name" value="Fumarase/aspartase (N-terminal domain)"/>
    <property type="match status" value="1"/>
</dbReference>
<dbReference type="HAMAP" id="MF_00229">
    <property type="entry name" value="His_ammonia_lyase"/>
    <property type="match status" value="1"/>
</dbReference>
<dbReference type="InterPro" id="IPR001106">
    <property type="entry name" value="Aromatic_Lyase"/>
</dbReference>
<dbReference type="InterPro" id="IPR024083">
    <property type="entry name" value="Fumarase/histidase_N"/>
</dbReference>
<dbReference type="InterPro" id="IPR005921">
    <property type="entry name" value="HutH"/>
</dbReference>
<dbReference type="InterPro" id="IPR008948">
    <property type="entry name" value="L-Aspartase-like"/>
</dbReference>
<dbReference type="InterPro" id="IPR022313">
    <property type="entry name" value="Phe/His_NH3-lyase_AS"/>
</dbReference>
<dbReference type="NCBIfam" id="TIGR01225">
    <property type="entry name" value="hutH"/>
    <property type="match status" value="1"/>
</dbReference>
<dbReference type="NCBIfam" id="NF006871">
    <property type="entry name" value="PRK09367.1"/>
    <property type="match status" value="1"/>
</dbReference>
<dbReference type="PANTHER" id="PTHR10362">
    <property type="entry name" value="HISTIDINE AMMONIA-LYASE"/>
    <property type="match status" value="1"/>
</dbReference>
<dbReference type="Pfam" id="PF00221">
    <property type="entry name" value="Lyase_aromatic"/>
    <property type="match status" value="1"/>
</dbReference>
<dbReference type="SUPFAM" id="SSF48557">
    <property type="entry name" value="L-aspartase-like"/>
    <property type="match status" value="1"/>
</dbReference>
<dbReference type="PROSITE" id="PS00488">
    <property type="entry name" value="PAL_HISTIDASE"/>
    <property type="match status" value="1"/>
</dbReference>
<feature type="chain" id="PRO_1000021554" description="Histidine ammonia-lyase">
    <location>
        <begin position="1"/>
        <end position="507"/>
    </location>
</feature>
<feature type="modified residue" description="2,3-didehydroalanine (Ser)" evidence="1">
    <location>
        <position position="142"/>
    </location>
</feature>
<feature type="cross-link" description="5-imidazolinone (Ala-Gly)" evidence="1">
    <location>
        <begin position="141"/>
        <end position="143"/>
    </location>
</feature>
<organism>
    <name type="scientific">Burkholderia lata (strain ATCC 17760 / DSM 23089 / LMG 22485 / NCIMB 9086 / R18194 / 383)</name>
    <dbReference type="NCBI Taxonomy" id="482957"/>
    <lineage>
        <taxon>Bacteria</taxon>
        <taxon>Pseudomonadati</taxon>
        <taxon>Pseudomonadota</taxon>
        <taxon>Betaproteobacteria</taxon>
        <taxon>Burkholderiales</taxon>
        <taxon>Burkholderiaceae</taxon>
        <taxon>Burkholderia</taxon>
        <taxon>Burkholderia cepacia complex</taxon>
    </lineage>
</organism>
<keyword id="KW-0963">Cytoplasm</keyword>
<keyword id="KW-0369">Histidine metabolism</keyword>
<keyword id="KW-0456">Lyase</keyword>
<gene>
    <name evidence="1" type="primary">hutH</name>
    <name type="ordered locus">Bcep18194_A5482</name>
</gene>
<evidence type="ECO:0000255" key="1">
    <source>
        <dbReference type="HAMAP-Rule" id="MF_00229"/>
    </source>
</evidence>
<name>HUTH_BURL3</name>
<comment type="catalytic activity">
    <reaction evidence="1">
        <text>L-histidine = trans-urocanate + NH4(+)</text>
        <dbReference type="Rhea" id="RHEA:21232"/>
        <dbReference type="ChEBI" id="CHEBI:17771"/>
        <dbReference type="ChEBI" id="CHEBI:28938"/>
        <dbReference type="ChEBI" id="CHEBI:57595"/>
        <dbReference type="EC" id="4.3.1.3"/>
    </reaction>
</comment>
<comment type="pathway">
    <text evidence="1">Amino-acid degradation; L-histidine degradation into L-glutamate; N-formimidoyl-L-glutamate from L-histidine: step 1/3.</text>
</comment>
<comment type="subcellular location">
    <subcellularLocation>
        <location evidence="1">Cytoplasm</location>
    </subcellularLocation>
</comment>
<comment type="PTM">
    <text evidence="1">Contains an active site 4-methylidene-imidazol-5-one (MIO), which is formed autocatalytically by cyclization and dehydration of residues Ala-Ser-Gly.</text>
</comment>
<comment type="similarity">
    <text evidence="1">Belongs to the PAL/histidase family.</text>
</comment>
<sequence length="507" mass="53202">MITLTPGHLTLPQLRQIARESVQLTLDPASFAKIDAGAKAVADIAAKGEPAYGINTGFGRLASTHIPHDQLELLQKNLVLSHAVGVGEPMARSSVRLLMALKLSSLGRGHSGIRREVMDALIKLFNADVLPLIPVKGSVGASGDLAPLAHMSAVLLGVGEVFIRGERASALDGLRVAGLAPLTLQAKEGLALLNGTQASTALALDNMFSIEDLYRTALVAGALSVDAAAGSVKPFDARIHELRGHQGQIDAAASYRDLLAGSPINQSHLDCDKVQDPYSLRCQPQVMGACLDQMRHAADVLLVEANAVSDNPLIFPDTGEVLSGGNFHAEPVAFAADNLALAASEIGALAERRIALLIDATLSGLPPFLVRDGGVNSGFMIAHVTAAALASENKTLAHPASVDSLPTSANQEDHVSMATFAARKLADIADNTKHILAIELLAAAQGVDLRAPYHTSPKLAPVMETIRGKVAHYELDHYFAPDIAVIAKLVGERAFAKVAPFSFASEQ</sequence>
<protein>
    <recommendedName>
        <fullName evidence="1">Histidine ammonia-lyase</fullName>
        <shortName evidence="1">Histidase</shortName>
        <ecNumber evidence="1">4.3.1.3</ecNumber>
    </recommendedName>
</protein>
<reference key="1">
    <citation type="submission" date="2005-10" db="EMBL/GenBank/DDBJ databases">
        <title>Complete sequence of chromosome 1 of Burkholderia sp. 383.</title>
        <authorList>
            <consortium name="US DOE Joint Genome Institute"/>
            <person name="Copeland A."/>
            <person name="Lucas S."/>
            <person name="Lapidus A."/>
            <person name="Barry K."/>
            <person name="Detter J.C."/>
            <person name="Glavina T."/>
            <person name="Hammon N."/>
            <person name="Israni S."/>
            <person name="Pitluck S."/>
            <person name="Chain P."/>
            <person name="Malfatti S."/>
            <person name="Shin M."/>
            <person name="Vergez L."/>
            <person name="Schmutz J."/>
            <person name="Larimer F."/>
            <person name="Land M."/>
            <person name="Kyrpides N."/>
            <person name="Lykidis A."/>
            <person name="Richardson P."/>
        </authorList>
    </citation>
    <scope>NUCLEOTIDE SEQUENCE [LARGE SCALE GENOMIC DNA]</scope>
    <source>
        <strain>ATCC 17760 / DSM 23089 / LMG 22485 / NCIMB 9086 / R18194 / 383</strain>
    </source>
</reference>
<proteinExistence type="inferred from homology"/>